<comment type="function">
    <text evidence="1">The glycine cleavage system catalyzes the degradation of glycine. The P protein binds the alpha-amino group of glycine through its pyridoxal phosphate cofactor; CO(2) is released and the remaining methylamine moiety is then transferred to the lipoamide cofactor of the H protein.</text>
</comment>
<comment type="catalytic activity">
    <reaction evidence="1">
        <text>N(6)-[(R)-lipoyl]-L-lysyl-[glycine-cleavage complex H protein] + glycine + H(+) = N(6)-[(R)-S(8)-aminomethyldihydrolipoyl]-L-lysyl-[glycine-cleavage complex H protein] + CO2</text>
        <dbReference type="Rhea" id="RHEA:24304"/>
        <dbReference type="Rhea" id="RHEA-COMP:10494"/>
        <dbReference type="Rhea" id="RHEA-COMP:10495"/>
        <dbReference type="ChEBI" id="CHEBI:15378"/>
        <dbReference type="ChEBI" id="CHEBI:16526"/>
        <dbReference type="ChEBI" id="CHEBI:57305"/>
        <dbReference type="ChEBI" id="CHEBI:83099"/>
        <dbReference type="ChEBI" id="CHEBI:83143"/>
        <dbReference type="EC" id="1.4.4.2"/>
    </reaction>
</comment>
<comment type="cofactor">
    <cofactor evidence="1">
        <name>pyridoxal 5'-phosphate</name>
        <dbReference type="ChEBI" id="CHEBI:597326"/>
    </cofactor>
</comment>
<comment type="subunit">
    <text evidence="1">The glycine cleavage system is composed of four proteins: P, T, L and H.</text>
</comment>
<comment type="similarity">
    <text evidence="1">Belongs to the GcvP family.</text>
</comment>
<name>GCSP_BACFR</name>
<dbReference type="EC" id="1.4.4.2" evidence="1"/>
<dbReference type="EMBL" id="AP006841">
    <property type="protein sequence ID" value="BAD48772.1"/>
    <property type="molecule type" value="Genomic_DNA"/>
</dbReference>
<dbReference type="RefSeq" id="WP_011202698.1">
    <property type="nucleotide sequence ID" value="NC_006347.1"/>
</dbReference>
<dbReference type="RefSeq" id="YP_099306.1">
    <property type="nucleotide sequence ID" value="NC_006347.1"/>
</dbReference>
<dbReference type="SMR" id="Q64UQ7"/>
<dbReference type="STRING" id="295405.BF2025"/>
<dbReference type="KEGG" id="bfr:BF2025"/>
<dbReference type="PATRIC" id="fig|295405.11.peg.1971"/>
<dbReference type="HOGENOM" id="CLU_004620_3_2_10"/>
<dbReference type="OrthoDB" id="9801272at2"/>
<dbReference type="Proteomes" id="UP000002197">
    <property type="component" value="Chromosome"/>
</dbReference>
<dbReference type="GO" id="GO:0005829">
    <property type="term" value="C:cytosol"/>
    <property type="evidence" value="ECO:0007669"/>
    <property type="project" value="TreeGrafter"/>
</dbReference>
<dbReference type="GO" id="GO:0005960">
    <property type="term" value="C:glycine cleavage complex"/>
    <property type="evidence" value="ECO:0007669"/>
    <property type="project" value="TreeGrafter"/>
</dbReference>
<dbReference type="GO" id="GO:0016594">
    <property type="term" value="F:glycine binding"/>
    <property type="evidence" value="ECO:0007669"/>
    <property type="project" value="TreeGrafter"/>
</dbReference>
<dbReference type="GO" id="GO:0004375">
    <property type="term" value="F:glycine dehydrogenase (decarboxylating) activity"/>
    <property type="evidence" value="ECO:0007669"/>
    <property type="project" value="UniProtKB-EC"/>
</dbReference>
<dbReference type="GO" id="GO:0030170">
    <property type="term" value="F:pyridoxal phosphate binding"/>
    <property type="evidence" value="ECO:0007669"/>
    <property type="project" value="TreeGrafter"/>
</dbReference>
<dbReference type="GO" id="GO:0019464">
    <property type="term" value="P:glycine decarboxylation via glycine cleavage system"/>
    <property type="evidence" value="ECO:0007669"/>
    <property type="project" value="UniProtKB-UniRule"/>
</dbReference>
<dbReference type="CDD" id="cd00613">
    <property type="entry name" value="GDC-P"/>
    <property type="match status" value="2"/>
</dbReference>
<dbReference type="FunFam" id="3.40.640.10:FF:000224">
    <property type="entry name" value="Probable glycine dehydrogenase (decarboxylating) subunit 2"/>
    <property type="match status" value="1"/>
</dbReference>
<dbReference type="Gene3D" id="3.90.1150.10">
    <property type="entry name" value="Aspartate Aminotransferase, domain 1"/>
    <property type="match status" value="2"/>
</dbReference>
<dbReference type="Gene3D" id="3.40.640.10">
    <property type="entry name" value="Type I PLP-dependent aspartate aminotransferase-like (Major domain)"/>
    <property type="match status" value="2"/>
</dbReference>
<dbReference type="HAMAP" id="MF_00711">
    <property type="entry name" value="GcvP"/>
    <property type="match status" value="1"/>
</dbReference>
<dbReference type="InterPro" id="IPR003437">
    <property type="entry name" value="GcvP"/>
</dbReference>
<dbReference type="InterPro" id="IPR049316">
    <property type="entry name" value="GDC-P_C"/>
</dbReference>
<dbReference type="InterPro" id="IPR049315">
    <property type="entry name" value="GDC-P_N"/>
</dbReference>
<dbReference type="InterPro" id="IPR020581">
    <property type="entry name" value="GDC_P"/>
</dbReference>
<dbReference type="InterPro" id="IPR015424">
    <property type="entry name" value="PyrdxlP-dep_Trfase"/>
</dbReference>
<dbReference type="InterPro" id="IPR015421">
    <property type="entry name" value="PyrdxlP-dep_Trfase_major"/>
</dbReference>
<dbReference type="InterPro" id="IPR015422">
    <property type="entry name" value="PyrdxlP-dep_Trfase_small"/>
</dbReference>
<dbReference type="NCBIfam" id="TIGR00461">
    <property type="entry name" value="gcvP"/>
    <property type="match status" value="1"/>
</dbReference>
<dbReference type="PANTHER" id="PTHR11773:SF1">
    <property type="entry name" value="GLYCINE DEHYDROGENASE (DECARBOXYLATING), MITOCHONDRIAL"/>
    <property type="match status" value="1"/>
</dbReference>
<dbReference type="PANTHER" id="PTHR11773">
    <property type="entry name" value="GLYCINE DEHYDROGENASE, DECARBOXYLATING"/>
    <property type="match status" value="1"/>
</dbReference>
<dbReference type="Pfam" id="PF21478">
    <property type="entry name" value="GcvP2_C"/>
    <property type="match status" value="1"/>
</dbReference>
<dbReference type="Pfam" id="PF02347">
    <property type="entry name" value="GDC-P"/>
    <property type="match status" value="2"/>
</dbReference>
<dbReference type="SUPFAM" id="SSF53383">
    <property type="entry name" value="PLP-dependent transferases"/>
    <property type="match status" value="2"/>
</dbReference>
<proteinExistence type="inferred from homology"/>
<accession>Q64UQ7</accession>
<protein>
    <recommendedName>
        <fullName evidence="1">Glycine dehydrogenase (decarboxylating)</fullName>
        <ecNumber evidence="1">1.4.4.2</ecNumber>
    </recommendedName>
    <alternativeName>
        <fullName evidence="1">Glycine cleavage system P-protein</fullName>
    </alternativeName>
    <alternativeName>
        <fullName evidence="1">Glycine decarboxylase</fullName>
    </alternativeName>
    <alternativeName>
        <fullName evidence="1">Glycine dehydrogenase (aminomethyl-transferring)</fullName>
    </alternativeName>
</protein>
<reference key="1">
    <citation type="journal article" date="2004" name="Proc. Natl. Acad. Sci. U.S.A.">
        <title>Genomic analysis of Bacteroides fragilis reveals extensive DNA inversions regulating cell surface adaptation.</title>
        <authorList>
            <person name="Kuwahara T."/>
            <person name="Yamashita A."/>
            <person name="Hirakawa H."/>
            <person name="Nakayama H."/>
            <person name="Toh H."/>
            <person name="Okada N."/>
            <person name="Kuhara S."/>
            <person name="Hattori M."/>
            <person name="Hayashi T."/>
            <person name="Ohnishi Y."/>
        </authorList>
    </citation>
    <scope>NUCLEOTIDE SEQUENCE [LARGE SCALE GENOMIC DNA]</scope>
    <source>
        <strain>YCH46</strain>
    </source>
</reference>
<organism>
    <name type="scientific">Bacteroides fragilis (strain YCH46)</name>
    <dbReference type="NCBI Taxonomy" id="295405"/>
    <lineage>
        <taxon>Bacteria</taxon>
        <taxon>Pseudomonadati</taxon>
        <taxon>Bacteroidota</taxon>
        <taxon>Bacteroidia</taxon>
        <taxon>Bacteroidales</taxon>
        <taxon>Bacteroidaceae</taxon>
        <taxon>Bacteroides</taxon>
    </lineage>
</organism>
<sequence length="949" mass="104679">MKTDLLACRHIGVNKADAEVMLRKIGVASLDELIDKTIPANIRLKAPLALPAPMTEYEFARHIAELAGKNKLFTTYIGMGWYNTITPAVIQRNVFENPVWYTSYTPYQTEVSQGRLEALMNFQTAVCDLTAMPLANCSLLDEATAAAEAVTMMYGLRSRNQQKAGANVVFIDENIFPQTLAVITTRAIPQDIEIRTGKFRDLEFTDDLFACVLQYPNANGNAEDYREFTEKAHTANCKVAVAADILSLALLTPPGEWGADIVFGTTQRLGTPMFYGGPSAGYFATRDEYKRNMPGRIIGWSKDKYGKLCYRMALQTREQHIKREKATSNICTAQALLATMAGFYTVYHGQEGIRNIASRIHSITVFLEKSISKLGFKQVNKQYFDTLRFILPDSVSAQQIRTIALSKEVNLRYFDNGDVGLSIDETTDVAAANILLSIFAIAAGKDFQKVDDIPEATIISEELKRQTPYLTHEVFSKYHTETEMMRYIKRLDRKDISLAQSMISLGSCTMKLNAAAEMLPLSCAEFMCMHPLVPEDQAAGYRELIHNLSEELKVITGFAGVSLQPNSGAAGEYAGLRTIRAYLESIGQGHRNKVLIPASAHGTNPASAIQAGFTTVTCACDEHGNVDMDDLRAKAEENKDDLAALMITYPSTHGIFETEIVEICQIIHACGAQVYMDGANMNAQVGLTNPGFIGADVCHLNLHKTFASPHGGGGPGVGPICVAEHLVPFLPGHGLFGNSQNEVSAAPFGSAGILPITYGYIRMMGAEGLTMATKTAILNANYLAACLKDTYGIVYRGANGFVGHEMILECRKVYEETGISENDIAKRLMDYGYHAPTLSFPVHGTLMIEPTESESLSELDNFVLTMLTIWNEIQEVKNGEADKEDNVLINAPHPEYEVVSDQWEHCYTREKAAYPIESVRENKFWVNVARVDNTLGDRKLLPTCYGCFD</sequence>
<keyword id="KW-0560">Oxidoreductase</keyword>
<keyword id="KW-0663">Pyridoxal phosphate</keyword>
<evidence type="ECO:0000255" key="1">
    <source>
        <dbReference type="HAMAP-Rule" id="MF_00711"/>
    </source>
</evidence>
<feature type="chain" id="PRO_0000227091" description="Glycine dehydrogenase (decarboxylating)">
    <location>
        <begin position="1"/>
        <end position="949"/>
    </location>
</feature>
<feature type="modified residue" description="N6-(pyridoxal phosphate)lysine" evidence="1">
    <location>
        <position position="704"/>
    </location>
</feature>
<gene>
    <name evidence="1" type="primary">gcvP</name>
    <name type="ordered locus">BF2025</name>
</gene>